<feature type="chain" id="PRO_0000055423" description="Protein-export protein SecB">
    <location>
        <begin position="1"/>
        <end position="155"/>
    </location>
</feature>
<comment type="function">
    <text evidence="1">One of the proteins required for the normal export of preproteins out of the cell cytoplasm. It is a molecular chaperone that binds to a subset of precursor proteins, maintaining them in a translocation-competent state. It also specifically binds to its receptor SecA.</text>
</comment>
<comment type="subunit">
    <text evidence="1">Homotetramer, a dimer of dimers. One homotetramer interacts with 1 SecA dimer.</text>
</comment>
<comment type="subcellular location">
    <subcellularLocation>
        <location evidence="1">Cytoplasm</location>
    </subcellularLocation>
</comment>
<comment type="similarity">
    <text evidence="1">Belongs to the SecB family.</text>
</comment>
<keyword id="KW-0143">Chaperone</keyword>
<keyword id="KW-0963">Cytoplasm</keyword>
<keyword id="KW-0653">Protein transport</keyword>
<keyword id="KW-0811">Translocation</keyword>
<keyword id="KW-0813">Transport</keyword>
<dbReference type="EMBL" id="AE016795">
    <property type="protein sequence ID" value="AAO09734.1"/>
    <property type="molecule type" value="Genomic_DNA"/>
</dbReference>
<dbReference type="RefSeq" id="WP_011079263.1">
    <property type="nucleotide sequence ID" value="NC_004459.3"/>
</dbReference>
<dbReference type="SMR" id="Q8DCW3"/>
<dbReference type="GeneID" id="93895544"/>
<dbReference type="KEGG" id="vvu:VV1_1278"/>
<dbReference type="HOGENOM" id="CLU_111574_1_0_6"/>
<dbReference type="Proteomes" id="UP000002275">
    <property type="component" value="Chromosome 1"/>
</dbReference>
<dbReference type="GO" id="GO:0005737">
    <property type="term" value="C:cytoplasm"/>
    <property type="evidence" value="ECO:0007669"/>
    <property type="project" value="UniProtKB-SubCell"/>
</dbReference>
<dbReference type="GO" id="GO:0051082">
    <property type="term" value="F:unfolded protein binding"/>
    <property type="evidence" value="ECO:0007669"/>
    <property type="project" value="InterPro"/>
</dbReference>
<dbReference type="GO" id="GO:0006457">
    <property type="term" value="P:protein folding"/>
    <property type="evidence" value="ECO:0007669"/>
    <property type="project" value="UniProtKB-UniRule"/>
</dbReference>
<dbReference type="GO" id="GO:0051262">
    <property type="term" value="P:protein tetramerization"/>
    <property type="evidence" value="ECO:0007669"/>
    <property type="project" value="InterPro"/>
</dbReference>
<dbReference type="GO" id="GO:0015031">
    <property type="term" value="P:protein transport"/>
    <property type="evidence" value="ECO:0007669"/>
    <property type="project" value="UniProtKB-UniRule"/>
</dbReference>
<dbReference type="Gene3D" id="3.10.420.10">
    <property type="entry name" value="SecB-like"/>
    <property type="match status" value="1"/>
</dbReference>
<dbReference type="HAMAP" id="MF_00821">
    <property type="entry name" value="SecB"/>
    <property type="match status" value="1"/>
</dbReference>
<dbReference type="InterPro" id="IPR003708">
    <property type="entry name" value="SecB"/>
</dbReference>
<dbReference type="InterPro" id="IPR035958">
    <property type="entry name" value="SecB-like_sf"/>
</dbReference>
<dbReference type="NCBIfam" id="NF004393">
    <property type="entry name" value="PRK05751.1-4"/>
    <property type="match status" value="1"/>
</dbReference>
<dbReference type="NCBIfam" id="TIGR00809">
    <property type="entry name" value="secB"/>
    <property type="match status" value="1"/>
</dbReference>
<dbReference type="PANTHER" id="PTHR36918">
    <property type="match status" value="1"/>
</dbReference>
<dbReference type="PANTHER" id="PTHR36918:SF1">
    <property type="entry name" value="PROTEIN-EXPORT PROTEIN SECB"/>
    <property type="match status" value="1"/>
</dbReference>
<dbReference type="Pfam" id="PF02556">
    <property type="entry name" value="SecB"/>
    <property type="match status" value="1"/>
</dbReference>
<dbReference type="PRINTS" id="PR01594">
    <property type="entry name" value="SECBCHAPRONE"/>
</dbReference>
<dbReference type="SUPFAM" id="SSF54611">
    <property type="entry name" value="SecB-like"/>
    <property type="match status" value="1"/>
</dbReference>
<sequence>MAEAAPQDTQQHFAIQRIFLKDVSFEAPNSPVMFQKEWNPDVKLDLDTQSRELGEGVYEVILRLTVTVKNAEETAFLCEVQQGGIFTAEKMEAGQLAHCLGAFCPNILFPYARETISSLVVKGTFPQLNLAPVNFDALFMNYLQQQAAQQGAEQA</sequence>
<reference key="1">
    <citation type="submission" date="2002-12" db="EMBL/GenBank/DDBJ databases">
        <title>Complete genome sequence of Vibrio vulnificus CMCP6.</title>
        <authorList>
            <person name="Rhee J.H."/>
            <person name="Kim S.Y."/>
            <person name="Chung S.S."/>
            <person name="Kim J.J."/>
            <person name="Moon Y.H."/>
            <person name="Jeong H."/>
            <person name="Choy H.E."/>
        </authorList>
    </citation>
    <scope>NUCLEOTIDE SEQUENCE [LARGE SCALE GENOMIC DNA]</scope>
    <source>
        <strain>CMCP6</strain>
    </source>
</reference>
<protein>
    <recommendedName>
        <fullName evidence="1">Protein-export protein SecB</fullName>
    </recommendedName>
</protein>
<organism>
    <name type="scientific">Vibrio vulnificus (strain CMCP6)</name>
    <dbReference type="NCBI Taxonomy" id="216895"/>
    <lineage>
        <taxon>Bacteria</taxon>
        <taxon>Pseudomonadati</taxon>
        <taxon>Pseudomonadota</taxon>
        <taxon>Gammaproteobacteria</taxon>
        <taxon>Vibrionales</taxon>
        <taxon>Vibrionaceae</taxon>
        <taxon>Vibrio</taxon>
    </lineage>
</organism>
<proteinExistence type="inferred from homology"/>
<evidence type="ECO:0000255" key="1">
    <source>
        <dbReference type="HAMAP-Rule" id="MF_00821"/>
    </source>
</evidence>
<name>SECB_VIBVU</name>
<gene>
    <name evidence="1" type="primary">secB</name>
    <name type="ordered locus">VV1_1278</name>
</gene>
<accession>Q8DCW3</accession>